<evidence type="ECO:0000250" key="1">
    <source>
        <dbReference type="UniProtKB" id="Q9M9P3"/>
    </source>
</evidence>
<evidence type="ECO:0000305" key="2"/>
<keyword id="KW-0548">Nucleotidyltransferase</keyword>
<keyword id="KW-0808">Transferase</keyword>
<organism>
    <name type="scientific">Staphylococcus aureus (strain N315)</name>
    <dbReference type="NCBI Taxonomy" id="158879"/>
    <lineage>
        <taxon>Bacteria</taxon>
        <taxon>Bacillati</taxon>
        <taxon>Bacillota</taxon>
        <taxon>Bacilli</taxon>
        <taxon>Bacillales</taxon>
        <taxon>Staphylococcaceae</taxon>
        <taxon>Staphylococcus</taxon>
    </lineage>
</organism>
<feature type="chain" id="PRO_0000271311" description="Probable uridylyltransferase SA1974">
    <location>
        <begin position="1"/>
        <end position="395"/>
    </location>
</feature>
<feature type="binding site" evidence="1">
    <location>
        <begin position="99"/>
        <end position="102"/>
    </location>
    <ligand>
        <name>UTP</name>
        <dbReference type="ChEBI" id="CHEBI:46398"/>
    </ligand>
</feature>
<feature type="binding site" evidence="1">
    <location>
        <position position="113"/>
    </location>
    <ligand>
        <name>UTP</name>
        <dbReference type="ChEBI" id="CHEBI:46398"/>
    </ligand>
</feature>
<feature type="binding site" evidence="1">
    <location>
        <position position="178"/>
    </location>
    <ligand>
        <name>UTP</name>
        <dbReference type="ChEBI" id="CHEBI:46398"/>
    </ligand>
</feature>
<feature type="binding site" evidence="1">
    <location>
        <position position="204"/>
    </location>
    <ligand>
        <name>UTP</name>
        <dbReference type="ChEBI" id="CHEBI:46398"/>
    </ligand>
</feature>
<feature type="binding site" evidence="1">
    <location>
        <position position="235"/>
    </location>
    <ligand>
        <name>UTP</name>
        <dbReference type="ChEBI" id="CHEBI:46398"/>
    </ligand>
</feature>
<feature type="binding site" evidence="1">
    <location>
        <position position="344"/>
    </location>
    <ligand>
        <name>UTP</name>
        <dbReference type="ChEBI" id="CHEBI:46398"/>
    </ligand>
</feature>
<protein>
    <recommendedName>
        <fullName>Probable uridylyltransferase SA1974</fullName>
        <ecNumber>2.7.7.-</ecNumber>
    </recommendedName>
</protein>
<sequence>MLDKNQLAKYKQDHLCEYEKIMSNNEKEALEEKVASLDLDFIAKLYNDLYINKKTIDDVSAVSEVKYDIKSQMSDDEIKRLEEQGLQAIKEGQFAVLLMAGGQGTRLGYKGPKGSFEIEGVSLFELQANQLKTLNHQSGHTIQWYIMTSDINHEETLAYFEAHSYFGYDQEAIHFFKQDNIVALSEEGKLILNQQGRIMETPNGNGGVFKSLDKAGYLEEMSNNGVKYIFLNNIDNVLVKVLDPLFAGFTVEHDYDITSKTIQPKPGESVGRLVNVDCKDTVLEYSELDPEVANQFNNANIGIHAFKLGFILNAVNRELPYHLAIKNLKQLDENFGVIEQPTLKFELFYFDIFTYGTSFVTLQVPREEEFSPLKNKEGKDSVATATEDLRRMGLI</sequence>
<dbReference type="EC" id="2.7.7.-"/>
<dbReference type="EMBL" id="BA000018">
    <property type="protein sequence ID" value="BAB43263.1"/>
    <property type="molecule type" value="Genomic_DNA"/>
</dbReference>
<dbReference type="PIR" id="F90012">
    <property type="entry name" value="F90012"/>
</dbReference>
<dbReference type="RefSeq" id="WP_000884735.1">
    <property type="nucleotide sequence ID" value="NC_002745.2"/>
</dbReference>
<dbReference type="SMR" id="Q7A4A4"/>
<dbReference type="EnsemblBacteria" id="BAB43263">
    <property type="protein sequence ID" value="BAB43263"/>
    <property type="gene ID" value="BAB43263"/>
</dbReference>
<dbReference type="KEGG" id="sau:SA1974"/>
<dbReference type="HOGENOM" id="CLU_025603_1_2_9"/>
<dbReference type="GO" id="GO:0070569">
    <property type="term" value="F:uridylyltransferase activity"/>
    <property type="evidence" value="ECO:0007669"/>
    <property type="project" value="InterPro"/>
</dbReference>
<dbReference type="CDD" id="cd04193">
    <property type="entry name" value="UDPGlcNAc_PPase"/>
    <property type="match status" value="1"/>
</dbReference>
<dbReference type="Gene3D" id="3.90.550.10">
    <property type="entry name" value="Spore Coat Polysaccharide Biosynthesis Protein SpsA, Chain A"/>
    <property type="match status" value="1"/>
</dbReference>
<dbReference type="InterPro" id="IPR029044">
    <property type="entry name" value="Nucleotide-diphossugar_trans"/>
</dbReference>
<dbReference type="InterPro" id="IPR039741">
    <property type="entry name" value="UDP-sugar_pyrophosphorylase"/>
</dbReference>
<dbReference type="InterPro" id="IPR002618">
    <property type="entry name" value="UDPGP_fam"/>
</dbReference>
<dbReference type="PANTHER" id="PTHR11952:SF2">
    <property type="entry name" value="LD24639P"/>
    <property type="match status" value="1"/>
</dbReference>
<dbReference type="PANTHER" id="PTHR11952">
    <property type="entry name" value="UDP- GLUCOSE PYROPHOSPHORYLASE"/>
    <property type="match status" value="1"/>
</dbReference>
<dbReference type="Pfam" id="PF01704">
    <property type="entry name" value="UDPGP"/>
    <property type="match status" value="1"/>
</dbReference>
<dbReference type="SUPFAM" id="SSF53448">
    <property type="entry name" value="Nucleotide-diphospho-sugar transferases"/>
    <property type="match status" value="1"/>
</dbReference>
<gene>
    <name type="ordered locus">SA1974</name>
</gene>
<name>URTF_STAAN</name>
<accession>Q7A4A4</accession>
<comment type="similarity">
    <text evidence="2">Belongs to the UDPGP type 1 family.</text>
</comment>
<reference key="1">
    <citation type="journal article" date="2001" name="Lancet">
        <title>Whole genome sequencing of meticillin-resistant Staphylococcus aureus.</title>
        <authorList>
            <person name="Kuroda M."/>
            <person name="Ohta T."/>
            <person name="Uchiyama I."/>
            <person name="Baba T."/>
            <person name="Yuzawa H."/>
            <person name="Kobayashi I."/>
            <person name="Cui L."/>
            <person name="Oguchi A."/>
            <person name="Aoki K."/>
            <person name="Nagai Y."/>
            <person name="Lian J.-Q."/>
            <person name="Ito T."/>
            <person name="Kanamori M."/>
            <person name="Matsumaru H."/>
            <person name="Maruyama A."/>
            <person name="Murakami H."/>
            <person name="Hosoyama A."/>
            <person name="Mizutani-Ui Y."/>
            <person name="Takahashi N.K."/>
            <person name="Sawano T."/>
            <person name="Inoue R."/>
            <person name="Kaito C."/>
            <person name="Sekimizu K."/>
            <person name="Hirakawa H."/>
            <person name="Kuhara S."/>
            <person name="Goto S."/>
            <person name="Yabuzaki J."/>
            <person name="Kanehisa M."/>
            <person name="Yamashita A."/>
            <person name="Oshima K."/>
            <person name="Furuya K."/>
            <person name="Yoshino C."/>
            <person name="Shiba T."/>
            <person name="Hattori M."/>
            <person name="Ogasawara N."/>
            <person name="Hayashi H."/>
            <person name="Hiramatsu K."/>
        </authorList>
    </citation>
    <scope>NUCLEOTIDE SEQUENCE [LARGE SCALE GENOMIC DNA]</scope>
    <source>
        <strain>N315</strain>
    </source>
</reference>
<reference key="2">
    <citation type="submission" date="2007-10" db="UniProtKB">
        <title>Shotgun proteomic analysis of total and membrane protein extracts of S. aureus strain N315.</title>
        <authorList>
            <person name="Vaezzadeh A.R."/>
            <person name="Deshusses J."/>
            <person name="Lescuyer P."/>
            <person name="Hochstrasser D.F."/>
        </authorList>
    </citation>
    <scope>IDENTIFICATION BY MASS SPECTROMETRY [LARGE SCALE ANALYSIS]</scope>
    <source>
        <strain>N315</strain>
    </source>
</reference>
<proteinExistence type="evidence at protein level"/>